<feature type="chain" id="PRO_1000198842" description="Anthranilate phosphoribosyltransferase">
    <location>
        <begin position="1"/>
        <end position="334"/>
    </location>
</feature>
<feature type="binding site" evidence="1">
    <location>
        <position position="79"/>
    </location>
    <ligand>
        <name>5-phospho-alpha-D-ribose 1-diphosphate</name>
        <dbReference type="ChEBI" id="CHEBI:58017"/>
    </ligand>
</feature>
<feature type="binding site" evidence="1">
    <location>
        <position position="79"/>
    </location>
    <ligand>
        <name>anthranilate</name>
        <dbReference type="ChEBI" id="CHEBI:16567"/>
        <label>1</label>
    </ligand>
</feature>
<feature type="binding site" evidence="1">
    <location>
        <begin position="82"/>
        <end position="83"/>
    </location>
    <ligand>
        <name>5-phospho-alpha-D-ribose 1-diphosphate</name>
        <dbReference type="ChEBI" id="CHEBI:58017"/>
    </ligand>
</feature>
<feature type="binding site" evidence="1">
    <location>
        <position position="87"/>
    </location>
    <ligand>
        <name>5-phospho-alpha-D-ribose 1-diphosphate</name>
        <dbReference type="ChEBI" id="CHEBI:58017"/>
    </ligand>
</feature>
<feature type="binding site" evidence="1">
    <location>
        <begin position="89"/>
        <end position="92"/>
    </location>
    <ligand>
        <name>5-phospho-alpha-D-ribose 1-diphosphate</name>
        <dbReference type="ChEBI" id="CHEBI:58017"/>
    </ligand>
</feature>
<feature type="binding site" evidence="1">
    <location>
        <position position="91"/>
    </location>
    <ligand>
        <name>Mg(2+)</name>
        <dbReference type="ChEBI" id="CHEBI:18420"/>
        <label>1</label>
    </ligand>
</feature>
<feature type="binding site" evidence="1">
    <location>
        <begin position="107"/>
        <end position="115"/>
    </location>
    <ligand>
        <name>5-phospho-alpha-D-ribose 1-diphosphate</name>
        <dbReference type="ChEBI" id="CHEBI:58017"/>
    </ligand>
</feature>
<feature type="binding site" evidence="1">
    <location>
        <position position="110"/>
    </location>
    <ligand>
        <name>anthranilate</name>
        <dbReference type="ChEBI" id="CHEBI:16567"/>
        <label>1</label>
    </ligand>
</feature>
<feature type="binding site" evidence="1">
    <location>
        <position position="119"/>
    </location>
    <ligand>
        <name>5-phospho-alpha-D-ribose 1-diphosphate</name>
        <dbReference type="ChEBI" id="CHEBI:58017"/>
    </ligand>
</feature>
<feature type="binding site" evidence="1">
    <location>
        <position position="165"/>
    </location>
    <ligand>
        <name>anthranilate</name>
        <dbReference type="ChEBI" id="CHEBI:16567"/>
        <label>2</label>
    </ligand>
</feature>
<feature type="binding site" evidence="1">
    <location>
        <position position="224"/>
    </location>
    <ligand>
        <name>Mg(2+)</name>
        <dbReference type="ChEBI" id="CHEBI:18420"/>
        <label>2</label>
    </ligand>
</feature>
<feature type="binding site" evidence="1">
    <location>
        <position position="225"/>
    </location>
    <ligand>
        <name>Mg(2+)</name>
        <dbReference type="ChEBI" id="CHEBI:18420"/>
        <label>1</label>
    </ligand>
</feature>
<feature type="binding site" evidence="1">
    <location>
        <position position="225"/>
    </location>
    <ligand>
        <name>Mg(2+)</name>
        <dbReference type="ChEBI" id="CHEBI:18420"/>
        <label>2</label>
    </ligand>
</feature>
<proteinExistence type="inferred from homology"/>
<reference key="1">
    <citation type="journal article" date="2010" name="Genome Biol.">
        <title>Structure and dynamics of the pan-genome of Streptococcus pneumoniae and closely related species.</title>
        <authorList>
            <person name="Donati C."/>
            <person name="Hiller N.L."/>
            <person name="Tettelin H."/>
            <person name="Muzzi A."/>
            <person name="Croucher N.J."/>
            <person name="Angiuoli S.V."/>
            <person name="Oggioni M."/>
            <person name="Dunning Hotopp J.C."/>
            <person name="Hu F.Z."/>
            <person name="Riley D.R."/>
            <person name="Covacci A."/>
            <person name="Mitchell T.J."/>
            <person name="Bentley S.D."/>
            <person name="Kilian M."/>
            <person name="Ehrlich G.D."/>
            <person name="Rappuoli R."/>
            <person name="Moxon E.R."/>
            <person name="Masignani V."/>
        </authorList>
    </citation>
    <scope>NUCLEOTIDE SEQUENCE [LARGE SCALE GENOMIC DNA]</scope>
    <source>
        <strain>JJA</strain>
    </source>
</reference>
<gene>
    <name evidence="1" type="primary">trpD</name>
    <name type="ordered locus">SPJ_1723</name>
</gene>
<protein>
    <recommendedName>
        <fullName evidence="1">Anthranilate phosphoribosyltransferase</fullName>
        <ecNumber evidence="1">2.4.2.18</ecNumber>
    </recommendedName>
</protein>
<evidence type="ECO:0000255" key="1">
    <source>
        <dbReference type="HAMAP-Rule" id="MF_00211"/>
    </source>
</evidence>
<keyword id="KW-0028">Amino-acid biosynthesis</keyword>
<keyword id="KW-0057">Aromatic amino acid biosynthesis</keyword>
<keyword id="KW-0328">Glycosyltransferase</keyword>
<keyword id="KW-0460">Magnesium</keyword>
<keyword id="KW-0479">Metal-binding</keyword>
<keyword id="KW-0808">Transferase</keyword>
<keyword id="KW-0822">Tryptophan biosynthesis</keyword>
<comment type="function">
    <text evidence="1">Catalyzes the transfer of the phosphoribosyl group of 5-phosphorylribose-1-pyrophosphate (PRPP) to anthranilate to yield N-(5'-phosphoribosyl)-anthranilate (PRA).</text>
</comment>
<comment type="catalytic activity">
    <reaction evidence="1">
        <text>N-(5-phospho-beta-D-ribosyl)anthranilate + diphosphate = 5-phospho-alpha-D-ribose 1-diphosphate + anthranilate</text>
        <dbReference type="Rhea" id="RHEA:11768"/>
        <dbReference type="ChEBI" id="CHEBI:16567"/>
        <dbReference type="ChEBI" id="CHEBI:18277"/>
        <dbReference type="ChEBI" id="CHEBI:33019"/>
        <dbReference type="ChEBI" id="CHEBI:58017"/>
        <dbReference type="EC" id="2.4.2.18"/>
    </reaction>
</comment>
<comment type="cofactor">
    <cofactor evidence="1">
        <name>Mg(2+)</name>
        <dbReference type="ChEBI" id="CHEBI:18420"/>
    </cofactor>
    <text evidence="1">Binds 2 magnesium ions per monomer.</text>
</comment>
<comment type="pathway">
    <text evidence="1">Amino-acid biosynthesis; L-tryptophan biosynthesis; L-tryptophan from chorismate: step 2/5.</text>
</comment>
<comment type="subunit">
    <text evidence="1">Homodimer.</text>
</comment>
<comment type="similarity">
    <text evidence="1">Belongs to the anthranilate phosphoribosyltransferase family.</text>
</comment>
<accession>C1CG45</accession>
<sequence>MKEIIEKLAKFENLSGVEMTDVIERIVTGRVTEAQIASLLLALKMKGETPEERTAIAQVMRGHAQHIPTEIHDAMDNCGTGGDKSFSFNISTTAAFVLAGGGIHMAKHGNRSISSKSGSADVLEALGINLDLKPAELGKVFDKTGIVFLFAKNMHPAMKYIMPARLELGIPTIMNLTGPLIHPMALETQLLGISRPELLESTAQVLKNMGRKRAIVVAGPEGLDEAGLNGTTKIALLENGEISLSSFTPEDLGMEGYAMEDIRGGNAQENAEILLSVLKNEASPFLETTVLNAGLGFYANGKIDSIKEGVALARQVIARGKALEKLRLLQEYQK</sequence>
<organism>
    <name type="scientific">Streptococcus pneumoniae (strain JJA)</name>
    <dbReference type="NCBI Taxonomy" id="488222"/>
    <lineage>
        <taxon>Bacteria</taxon>
        <taxon>Bacillati</taxon>
        <taxon>Bacillota</taxon>
        <taxon>Bacilli</taxon>
        <taxon>Lactobacillales</taxon>
        <taxon>Streptococcaceae</taxon>
        <taxon>Streptococcus</taxon>
    </lineage>
</organism>
<name>TRPD_STRZJ</name>
<dbReference type="EC" id="2.4.2.18" evidence="1"/>
<dbReference type="EMBL" id="CP000919">
    <property type="protein sequence ID" value="ACO20080.1"/>
    <property type="molecule type" value="Genomic_DNA"/>
</dbReference>
<dbReference type="RefSeq" id="WP_000658684.1">
    <property type="nucleotide sequence ID" value="NC_012466.1"/>
</dbReference>
<dbReference type="SMR" id="C1CG45"/>
<dbReference type="GeneID" id="45652966"/>
<dbReference type="KEGG" id="sjj:SPJ_1723"/>
<dbReference type="HOGENOM" id="CLU_034315_2_1_9"/>
<dbReference type="UniPathway" id="UPA00035">
    <property type="reaction ID" value="UER00041"/>
</dbReference>
<dbReference type="Proteomes" id="UP000002206">
    <property type="component" value="Chromosome"/>
</dbReference>
<dbReference type="GO" id="GO:0005829">
    <property type="term" value="C:cytosol"/>
    <property type="evidence" value="ECO:0007669"/>
    <property type="project" value="TreeGrafter"/>
</dbReference>
<dbReference type="GO" id="GO:0004048">
    <property type="term" value="F:anthranilate phosphoribosyltransferase activity"/>
    <property type="evidence" value="ECO:0007669"/>
    <property type="project" value="UniProtKB-UniRule"/>
</dbReference>
<dbReference type="GO" id="GO:0000287">
    <property type="term" value="F:magnesium ion binding"/>
    <property type="evidence" value="ECO:0007669"/>
    <property type="project" value="UniProtKB-UniRule"/>
</dbReference>
<dbReference type="GO" id="GO:0000162">
    <property type="term" value="P:L-tryptophan biosynthetic process"/>
    <property type="evidence" value="ECO:0007669"/>
    <property type="project" value="UniProtKB-UniRule"/>
</dbReference>
<dbReference type="FunFam" id="3.40.1030.10:FF:000002">
    <property type="entry name" value="Anthranilate phosphoribosyltransferase"/>
    <property type="match status" value="1"/>
</dbReference>
<dbReference type="Gene3D" id="3.40.1030.10">
    <property type="entry name" value="Nucleoside phosphorylase/phosphoribosyltransferase catalytic domain"/>
    <property type="match status" value="1"/>
</dbReference>
<dbReference type="Gene3D" id="1.20.970.10">
    <property type="entry name" value="Transferase, Pyrimidine Nucleoside Phosphorylase, Chain C"/>
    <property type="match status" value="1"/>
</dbReference>
<dbReference type="HAMAP" id="MF_00211">
    <property type="entry name" value="TrpD"/>
    <property type="match status" value="1"/>
</dbReference>
<dbReference type="InterPro" id="IPR005940">
    <property type="entry name" value="Anthranilate_Pribosyl_Tfrase"/>
</dbReference>
<dbReference type="InterPro" id="IPR000312">
    <property type="entry name" value="Glycosyl_Trfase_fam3"/>
</dbReference>
<dbReference type="InterPro" id="IPR017459">
    <property type="entry name" value="Glycosyl_Trfase_fam3_N_dom"/>
</dbReference>
<dbReference type="InterPro" id="IPR036320">
    <property type="entry name" value="Glycosyl_Trfase_fam3_N_dom_sf"/>
</dbReference>
<dbReference type="InterPro" id="IPR035902">
    <property type="entry name" value="Nuc_phospho_transferase"/>
</dbReference>
<dbReference type="NCBIfam" id="TIGR01245">
    <property type="entry name" value="trpD"/>
    <property type="match status" value="1"/>
</dbReference>
<dbReference type="PANTHER" id="PTHR43285">
    <property type="entry name" value="ANTHRANILATE PHOSPHORIBOSYLTRANSFERASE"/>
    <property type="match status" value="1"/>
</dbReference>
<dbReference type="PANTHER" id="PTHR43285:SF2">
    <property type="entry name" value="ANTHRANILATE PHOSPHORIBOSYLTRANSFERASE"/>
    <property type="match status" value="1"/>
</dbReference>
<dbReference type="Pfam" id="PF02885">
    <property type="entry name" value="Glycos_trans_3N"/>
    <property type="match status" value="1"/>
</dbReference>
<dbReference type="Pfam" id="PF00591">
    <property type="entry name" value="Glycos_transf_3"/>
    <property type="match status" value="1"/>
</dbReference>
<dbReference type="SUPFAM" id="SSF52418">
    <property type="entry name" value="Nucleoside phosphorylase/phosphoribosyltransferase catalytic domain"/>
    <property type="match status" value="1"/>
</dbReference>
<dbReference type="SUPFAM" id="SSF47648">
    <property type="entry name" value="Nucleoside phosphorylase/phosphoribosyltransferase N-terminal domain"/>
    <property type="match status" value="1"/>
</dbReference>